<gene>
    <name evidence="1" type="primary">dxr</name>
    <name type="ordered locus">LA_3292</name>
</gene>
<dbReference type="EC" id="1.1.1.267" evidence="1"/>
<dbReference type="EMBL" id="AE010300">
    <property type="protein sequence ID" value="AAN50490.2"/>
    <property type="molecule type" value="Genomic_DNA"/>
</dbReference>
<dbReference type="RefSeq" id="NP_713472.2">
    <property type="nucleotide sequence ID" value="NC_004342.2"/>
</dbReference>
<dbReference type="RefSeq" id="WP_011069750.1">
    <property type="nucleotide sequence ID" value="NC_004342.2"/>
</dbReference>
<dbReference type="SMR" id="Q8F146"/>
<dbReference type="FunCoup" id="Q8F146">
    <property type="interactions" value="323"/>
</dbReference>
<dbReference type="STRING" id="189518.LA_3292"/>
<dbReference type="PaxDb" id="189518-LA_3292"/>
<dbReference type="EnsemblBacteria" id="AAN50490">
    <property type="protein sequence ID" value="AAN50490"/>
    <property type="gene ID" value="LA_3292"/>
</dbReference>
<dbReference type="KEGG" id="lil:LA_3292"/>
<dbReference type="PATRIC" id="fig|189518.3.peg.3262"/>
<dbReference type="HOGENOM" id="CLU_035714_4_0_12"/>
<dbReference type="InParanoid" id="Q8F146"/>
<dbReference type="OrthoDB" id="9806546at2"/>
<dbReference type="UniPathway" id="UPA00056">
    <property type="reaction ID" value="UER00092"/>
</dbReference>
<dbReference type="Proteomes" id="UP000001408">
    <property type="component" value="Chromosome I"/>
</dbReference>
<dbReference type="GO" id="GO:0030604">
    <property type="term" value="F:1-deoxy-D-xylulose-5-phosphate reductoisomerase activity"/>
    <property type="evidence" value="ECO:0000318"/>
    <property type="project" value="GO_Central"/>
</dbReference>
<dbReference type="GO" id="GO:0030145">
    <property type="term" value="F:manganese ion binding"/>
    <property type="evidence" value="ECO:0000318"/>
    <property type="project" value="GO_Central"/>
</dbReference>
<dbReference type="GO" id="GO:0070402">
    <property type="term" value="F:NADPH binding"/>
    <property type="evidence" value="ECO:0000318"/>
    <property type="project" value="GO_Central"/>
</dbReference>
<dbReference type="GO" id="GO:0051484">
    <property type="term" value="P:isopentenyl diphosphate biosynthetic process, methylerythritol 4-phosphate pathway involved in terpenoid biosynthetic process"/>
    <property type="evidence" value="ECO:0000318"/>
    <property type="project" value="GO_Central"/>
</dbReference>
<dbReference type="FunFam" id="3.40.50.720:FF:000045">
    <property type="entry name" value="1-deoxy-D-xylulose 5-phosphate reductoisomerase"/>
    <property type="match status" value="1"/>
</dbReference>
<dbReference type="Gene3D" id="1.10.1740.10">
    <property type="match status" value="1"/>
</dbReference>
<dbReference type="Gene3D" id="3.40.50.720">
    <property type="entry name" value="NAD(P)-binding Rossmann-like Domain"/>
    <property type="match status" value="1"/>
</dbReference>
<dbReference type="HAMAP" id="MF_00183">
    <property type="entry name" value="DXP_reductoisom"/>
    <property type="match status" value="1"/>
</dbReference>
<dbReference type="InterPro" id="IPR003821">
    <property type="entry name" value="DXP_reductoisomerase"/>
</dbReference>
<dbReference type="InterPro" id="IPR013644">
    <property type="entry name" value="DXP_reductoisomerase_C"/>
</dbReference>
<dbReference type="InterPro" id="IPR013512">
    <property type="entry name" value="DXP_reductoisomerase_N"/>
</dbReference>
<dbReference type="InterPro" id="IPR026877">
    <property type="entry name" value="DXPR_C"/>
</dbReference>
<dbReference type="InterPro" id="IPR036169">
    <property type="entry name" value="DXPR_C_sf"/>
</dbReference>
<dbReference type="InterPro" id="IPR036291">
    <property type="entry name" value="NAD(P)-bd_dom_sf"/>
</dbReference>
<dbReference type="NCBIfam" id="TIGR00243">
    <property type="entry name" value="Dxr"/>
    <property type="match status" value="1"/>
</dbReference>
<dbReference type="PANTHER" id="PTHR30525">
    <property type="entry name" value="1-DEOXY-D-XYLULOSE 5-PHOSPHATE REDUCTOISOMERASE"/>
    <property type="match status" value="1"/>
</dbReference>
<dbReference type="PANTHER" id="PTHR30525:SF0">
    <property type="entry name" value="1-DEOXY-D-XYLULOSE 5-PHOSPHATE REDUCTOISOMERASE, CHLOROPLASTIC"/>
    <property type="match status" value="1"/>
</dbReference>
<dbReference type="Pfam" id="PF08436">
    <property type="entry name" value="DXP_redisom_C"/>
    <property type="match status" value="1"/>
</dbReference>
<dbReference type="Pfam" id="PF02670">
    <property type="entry name" value="DXP_reductoisom"/>
    <property type="match status" value="1"/>
</dbReference>
<dbReference type="Pfam" id="PF13288">
    <property type="entry name" value="DXPR_C"/>
    <property type="match status" value="1"/>
</dbReference>
<dbReference type="PIRSF" id="PIRSF006205">
    <property type="entry name" value="Dxp_reductismrs"/>
    <property type="match status" value="1"/>
</dbReference>
<dbReference type="SUPFAM" id="SSF69055">
    <property type="entry name" value="1-deoxy-D-xylulose-5-phosphate reductoisomerase, C-terminal domain"/>
    <property type="match status" value="1"/>
</dbReference>
<dbReference type="SUPFAM" id="SSF55347">
    <property type="entry name" value="Glyceraldehyde-3-phosphate dehydrogenase-like, C-terminal domain"/>
    <property type="match status" value="1"/>
</dbReference>
<dbReference type="SUPFAM" id="SSF51735">
    <property type="entry name" value="NAD(P)-binding Rossmann-fold domains"/>
    <property type="match status" value="1"/>
</dbReference>
<accession>Q8F146</accession>
<comment type="function">
    <text evidence="1">Catalyzes the NADPH-dependent rearrangement and reduction of 1-deoxy-D-xylulose-5-phosphate (DXP) to 2-C-methyl-D-erythritol 4-phosphate (MEP).</text>
</comment>
<comment type="catalytic activity">
    <reaction evidence="1">
        <text>2-C-methyl-D-erythritol 4-phosphate + NADP(+) = 1-deoxy-D-xylulose 5-phosphate + NADPH + H(+)</text>
        <dbReference type="Rhea" id="RHEA:13717"/>
        <dbReference type="ChEBI" id="CHEBI:15378"/>
        <dbReference type="ChEBI" id="CHEBI:57783"/>
        <dbReference type="ChEBI" id="CHEBI:57792"/>
        <dbReference type="ChEBI" id="CHEBI:58262"/>
        <dbReference type="ChEBI" id="CHEBI:58349"/>
        <dbReference type="EC" id="1.1.1.267"/>
    </reaction>
    <physiologicalReaction direction="right-to-left" evidence="1">
        <dbReference type="Rhea" id="RHEA:13719"/>
    </physiologicalReaction>
</comment>
<comment type="cofactor">
    <cofactor evidence="1">
        <name>Mg(2+)</name>
        <dbReference type="ChEBI" id="CHEBI:18420"/>
    </cofactor>
    <cofactor evidence="1">
        <name>Mn(2+)</name>
        <dbReference type="ChEBI" id="CHEBI:29035"/>
    </cofactor>
</comment>
<comment type="pathway">
    <text evidence="1">Isoprenoid biosynthesis; isopentenyl diphosphate biosynthesis via DXP pathway; isopentenyl diphosphate from 1-deoxy-D-xylulose 5-phosphate: step 1/6.</text>
</comment>
<comment type="similarity">
    <text evidence="1">Belongs to the DXR family.</text>
</comment>
<feature type="chain" id="PRO_0000163668" description="1-deoxy-D-xylulose 5-phosphate reductoisomerase">
    <location>
        <begin position="1"/>
        <end position="389"/>
    </location>
</feature>
<feature type="binding site" evidence="1">
    <location>
        <position position="11"/>
    </location>
    <ligand>
        <name>NADPH</name>
        <dbReference type="ChEBI" id="CHEBI:57783"/>
    </ligand>
</feature>
<feature type="binding site" evidence="1">
    <location>
        <position position="12"/>
    </location>
    <ligand>
        <name>NADPH</name>
        <dbReference type="ChEBI" id="CHEBI:57783"/>
    </ligand>
</feature>
<feature type="binding site" evidence="1">
    <location>
        <position position="13"/>
    </location>
    <ligand>
        <name>NADPH</name>
        <dbReference type="ChEBI" id="CHEBI:57783"/>
    </ligand>
</feature>
<feature type="binding site" evidence="1">
    <location>
        <position position="14"/>
    </location>
    <ligand>
        <name>NADPH</name>
        <dbReference type="ChEBI" id="CHEBI:57783"/>
    </ligand>
</feature>
<feature type="binding site" evidence="1">
    <location>
        <position position="39"/>
    </location>
    <ligand>
        <name>NADPH</name>
        <dbReference type="ChEBI" id="CHEBI:57783"/>
    </ligand>
</feature>
<feature type="binding site" evidence="1">
    <location>
        <position position="122"/>
    </location>
    <ligand>
        <name>NADPH</name>
        <dbReference type="ChEBI" id="CHEBI:57783"/>
    </ligand>
</feature>
<feature type="binding site" evidence="1">
    <location>
        <position position="123"/>
    </location>
    <ligand>
        <name>1-deoxy-D-xylulose 5-phosphate</name>
        <dbReference type="ChEBI" id="CHEBI:57792"/>
    </ligand>
</feature>
<feature type="binding site" evidence="1">
    <location>
        <position position="124"/>
    </location>
    <ligand>
        <name>NADPH</name>
        <dbReference type="ChEBI" id="CHEBI:57783"/>
    </ligand>
</feature>
<feature type="binding site" evidence="1">
    <location>
        <position position="148"/>
    </location>
    <ligand>
        <name>Mn(2+)</name>
        <dbReference type="ChEBI" id="CHEBI:29035"/>
    </ligand>
</feature>
<feature type="binding site" evidence="1">
    <location>
        <position position="149"/>
    </location>
    <ligand>
        <name>1-deoxy-D-xylulose 5-phosphate</name>
        <dbReference type="ChEBI" id="CHEBI:57792"/>
    </ligand>
</feature>
<feature type="binding site" evidence="1">
    <location>
        <position position="150"/>
    </location>
    <ligand>
        <name>1-deoxy-D-xylulose 5-phosphate</name>
        <dbReference type="ChEBI" id="CHEBI:57792"/>
    </ligand>
</feature>
<feature type="binding site" evidence="1">
    <location>
        <position position="150"/>
    </location>
    <ligand>
        <name>Mn(2+)</name>
        <dbReference type="ChEBI" id="CHEBI:29035"/>
    </ligand>
</feature>
<feature type="binding site" evidence="1">
    <location>
        <position position="174"/>
    </location>
    <ligand>
        <name>1-deoxy-D-xylulose 5-phosphate</name>
        <dbReference type="ChEBI" id="CHEBI:57792"/>
    </ligand>
</feature>
<feature type="binding site" evidence="1">
    <location>
        <position position="197"/>
    </location>
    <ligand>
        <name>1-deoxy-D-xylulose 5-phosphate</name>
        <dbReference type="ChEBI" id="CHEBI:57792"/>
    </ligand>
</feature>
<feature type="binding site" evidence="1">
    <location>
        <position position="203"/>
    </location>
    <ligand>
        <name>NADPH</name>
        <dbReference type="ChEBI" id="CHEBI:57783"/>
    </ligand>
</feature>
<feature type="binding site" evidence="1">
    <location>
        <position position="210"/>
    </location>
    <ligand>
        <name>1-deoxy-D-xylulose 5-phosphate</name>
        <dbReference type="ChEBI" id="CHEBI:57792"/>
    </ligand>
</feature>
<feature type="binding site" evidence="1">
    <location>
        <position position="215"/>
    </location>
    <ligand>
        <name>1-deoxy-D-xylulose 5-phosphate</name>
        <dbReference type="ChEBI" id="CHEBI:57792"/>
    </ligand>
</feature>
<feature type="binding site" evidence="1">
    <location>
        <position position="216"/>
    </location>
    <ligand>
        <name>1-deoxy-D-xylulose 5-phosphate</name>
        <dbReference type="ChEBI" id="CHEBI:57792"/>
    </ligand>
</feature>
<feature type="binding site" evidence="1">
    <location>
        <position position="219"/>
    </location>
    <ligand>
        <name>1-deoxy-D-xylulose 5-phosphate</name>
        <dbReference type="ChEBI" id="CHEBI:57792"/>
    </ligand>
</feature>
<feature type="binding site" evidence="1">
    <location>
        <position position="219"/>
    </location>
    <ligand>
        <name>Mn(2+)</name>
        <dbReference type="ChEBI" id="CHEBI:29035"/>
    </ligand>
</feature>
<keyword id="KW-0414">Isoprene biosynthesis</keyword>
<keyword id="KW-0464">Manganese</keyword>
<keyword id="KW-0479">Metal-binding</keyword>
<keyword id="KW-0521">NADP</keyword>
<keyword id="KW-0560">Oxidoreductase</keyword>
<keyword id="KW-1185">Reference proteome</keyword>
<evidence type="ECO:0000255" key="1">
    <source>
        <dbReference type="HAMAP-Rule" id="MF_00183"/>
    </source>
</evidence>
<sequence>MTTSVCLLGASGSVGESTLKVLRAHPEKFRLHSFSVHSNLEKAKEIQKEFSPDFICVSSDFADVGVLGNKLGRTQILYGESSLCELVREPEVEIVITAIVGSVGLRPTIAAITAGKRLGIANKETLVTSGPLIQSLIAKHNTKVVPVDSEHNALFQLLESLNPNSVEKIILTASGGAFRDLPVEQLSSVTKEQALHHPTWNMGPKITIDSNGMINKGLEVIEAHFLFNVPYDKIGVVIHPQSIAHGIVELKDGASFLYASYPDMIFPIAHSLFHPEPVPKVLRSYPAKDWGKLEFREPDFKRYPGLGLAFEAGKVGGTAPCIFNAANEAAVELFLKDEIRFIEIPDYIRETLDEIKIEFPLSLEEYEEADRIARETVRNLKARKVVSAC</sequence>
<proteinExistence type="inferred from homology"/>
<protein>
    <recommendedName>
        <fullName evidence="1">1-deoxy-D-xylulose 5-phosphate reductoisomerase</fullName>
        <shortName evidence="1">DXP reductoisomerase</shortName>
        <ecNumber evidence="1">1.1.1.267</ecNumber>
    </recommendedName>
    <alternativeName>
        <fullName evidence="1">1-deoxyxylulose-5-phosphate reductoisomerase</fullName>
    </alternativeName>
    <alternativeName>
        <fullName evidence="1">2-C-methyl-D-erythritol 4-phosphate synthase</fullName>
    </alternativeName>
</protein>
<organism>
    <name type="scientific">Leptospira interrogans serogroup Icterohaemorrhagiae serovar Lai (strain 56601)</name>
    <dbReference type="NCBI Taxonomy" id="189518"/>
    <lineage>
        <taxon>Bacteria</taxon>
        <taxon>Pseudomonadati</taxon>
        <taxon>Spirochaetota</taxon>
        <taxon>Spirochaetia</taxon>
        <taxon>Leptospirales</taxon>
        <taxon>Leptospiraceae</taxon>
        <taxon>Leptospira</taxon>
    </lineage>
</organism>
<name>DXR_LEPIN</name>
<reference key="1">
    <citation type="journal article" date="2003" name="Nature">
        <title>Unique physiological and pathogenic features of Leptospira interrogans revealed by whole-genome sequencing.</title>
        <authorList>
            <person name="Ren S.-X."/>
            <person name="Fu G."/>
            <person name="Jiang X.-G."/>
            <person name="Zeng R."/>
            <person name="Miao Y.-G."/>
            <person name="Xu H."/>
            <person name="Zhang Y.-X."/>
            <person name="Xiong H."/>
            <person name="Lu G."/>
            <person name="Lu L.-F."/>
            <person name="Jiang H.-Q."/>
            <person name="Jia J."/>
            <person name="Tu Y.-F."/>
            <person name="Jiang J.-X."/>
            <person name="Gu W.-Y."/>
            <person name="Zhang Y.-Q."/>
            <person name="Cai Z."/>
            <person name="Sheng H.-H."/>
            <person name="Yin H.-F."/>
            <person name="Zhang Y."/>
            <person name="Zhu G.-F."/>
            <person name="Wan M."/>
            <person name="Huang H.-L."/>
            <person name="Qian Z."/>
            <person name="Wang S.-Y."/>
            <person name="Ma W."/>
            <person name="Yao Z.-J."/>
            <person name="Shen Y."/>
            <person name="Qiang B.-Q."/>
            <person name="Xia Q.-C."/>
            <person name="Guo X.-K."/>
            <person name="Danchin A."/>
            <person name="Saint Girons I."/>
            <person name="Somerville R.L."/>
            <person name="Wen Y.-M."/>
            <person name="Shi M.-H."/>
            <person name="Chen Z."/>
            <person name="Xu J.-G."/>
            <person name="Zhao G.-P."/>
        </authorList>
    </citation>
    <scope>NUCLEOTIDE SEQUENCE [LARGE SCALE GENOMIC DNA]</scope>
    <source>
        <strain>56601</strain>
    </source>
</reference>